<evidence type="ECO:0000255" key="1">
    <source>
        <dbReference type="HAMAP-Rule" id="MF_00636"/>
    </source>
</evidence>
<dbReference type="EMBL" id="BA000031">
    <property type="protein sequence ID" value="BAC60936.1"/>
    <property type="molecule type" value="Genomic_DNA"/>
</dbReference>
<dbReference type="RefSeq" id="NP_799052.1">
    <property type="nucleotide sequence ID" value="NC_004603.1"/>
</dbReference>
<dbReference type="SMR" id="Q87LD9"/>
<dbReference type="GeneID" id="1190218"/>
<dbReference type="KEGG" id="vpa:VP2673"/>
<dbReference type="PATRIC" id="fig|223926.6.peg.2568"/>
<dbReference type="eggNOG" id="COG1660">
    <property type="taxonomic scope" value="Bacteria"/>
</dbReference>
<dbReference type="HOGENOM" id="CLU_059558_1_1_6"/>
<dbReference type="Proteomes" id="UP000002493">
    <property type="component" value="Chromosome 1"/>
</dbReference>
<dbReference type="GO" id="GO:0005524">
    <property type="term" value="F:ATP binding"/>
    <property type="evidence" value="ECO:0007669"/>
    <property type="project" value="UniProtKB-UniRule"/>
</dbReference>
<dbReference type="GO" id="GO:0005525">
    <property type="term" value="F:GTP binding"/>
    <property type="evidence" value="ECO:0007669"/>
    <property type="project" value="UniProtKB-UniRule"/>
</dbReference>
<dbReference type="Gene3D" id="3.40.50.300">
    <property type="entry name" value="P-loop containing nucleotide triphosphate hydrolases"/>
    <property type="match status" value="1"/>
</dbReference>
<dbReference type="HAMAP" id="MF_00636">
    <property type="entry name" value="RapZ_like"/>
    <property type="match status" value="1"/>
</dbReference>
<dbReference type="InterPro" id="IPR027417">
    <property type="entry name" value="P-loop_NTPase"/>
</dbReference>
<dbReference type="InterPro" id="IPR005337">
    <property type="entry name" value="RapZ-like"/>
</dbReference>
<dbReference type="InterPro" id="IPR053930">
    <property type="entry name" value="RapZ-like_N"/>
</dbReference>
<dbReference type="InterPro" id="IPR053931">
    <property type="entry name" value="RapZ_C"/>
</dbReference>
<dbReference type="NCBIfam" id="NF003828">
    <property type="entry name" value="PRK05416.1"/>
    <property type="match status" value="1"/>
</dbReference>
<dbReference type="PANTHER" id="PTHR30448">
    <property type="entry name" value="RNASE ADAPTER PROTEIN RAPZ"/>
    <property type="match status" value="1"/>
</dbReference>
<dbReference type="PANTHER" id="PTHR30448:SF0">
    <property type="entry name" value="RNASE ADAPTER PROTEIN RAPZ"/>
    <property type="match status" value="1"/>
</dbReference>
<dbReference type="Pfam" id="PF22740">
    <property type="entry name" value="PapZ_C"/>
    <property type="match status" value="1"/>
</dbReference>
<dbReference type="Pfam" id="PF03668">
    <property type="entry name" value="RapZ-like_N"/>
    <property type="match status" value="1"/>
</dbReference>
<dbReference type="PIRSF" id="PIRSF005052">
    <property type="entry name" value="P-loopkin"/>
    <property type="match status" value="1"/>
</dbReference>
<dbReference type="SUPFAM" id="SSF52540">
    <property type="entry name" value="P-loop containing nucleoside triphosphate hydrolases"/>
    <property type="match status" value="1"/>
</dbReference>
<gene>
    <name type="ordered locus">VP2673</name>
</gene>
<sequence>MRLIVVSGHSGAGKSIALRVLEDLGYYCVDNLPVNLLDAFVHSIADSKQNVAVSIDIRNIPKKLKELTGTLEQLKTELDVTVLFLDANKETLLKRYSETRRIHPLSLGGQSLSLDQAIEREKEILTPLKAHADLILNSSGQSLHELSETVRMRVEGRDRKGLVMVFESFGFKYGLPSDADYVFDVRFLPNPHWEPALRPLTGLDAPIAAFLEQHQSVLSLKYQIESFIETWLPLLEKNNRSYLTVAIGCTGGKHRSVYLTQQIGEYFADKGHQVQIRHTSLEKNAKE</sequence>
<protein>
    <recommendedName>
        <fullName evidence="1">Nucleotide-binding protein VP2673</fullName>
    </recommendedName>
</protein>
<accession>Q87LD9</accession>
<keyword id="KW-0067">ATP-binding</keyword>
<keyword id="KW-0342">GTP-binding</keyword>
<keyword id="KW-0547">Nucleotide-binding</keyword>
<proteinExistence type="inferred from homology"/>
<organism>
    <name type="scientific">Vibrio parahaemolyticus serotype O3:K6 (strain RIMD 2210633)</name>
    <dbReference type="NCBI Taxonomy" id="223926"/>
    <lineage>
        <taxon>Bacteria</taxon>
        <taxon>Pseudomonadati</taxon>
        <taxon>Pseudomonadota</taxon>
        <taxon>Gammaproteobacteria</taxon>
        <taxon>Vibrionales</taxon>
        <taxon>Vibrionaceae</taxon>
        <taxon>Vibrio</taxon>
    </lineage>
</organism>
<name>Y2673_VIBPA</name>
<comment type="function">
    <text evidence="1">Displays ATPase and GTPase activities.</text>
</comment>
<comment type="similarity">
    <text evidence="1">Belongs to the RapZ-like family.</text>
</comment>
<feature type="chain" id="PRO_0000107786" description="Nucleotide-binding protein VP2673">
    <location>
        <begin position="1"/>
        <end position="287"/>
    </location>
</feature>
<feature type="binding site" evidence="1">
    <location>
        <begin position="8"/>
        <end position="15"/>
    </location>
    <ligand>
        <name>ATP</name>
        <dbReference type="ChEBI" id="CHEBI:30616"/>
    </ligand>
</feature>
<feature type="binding site" evidence="1">
    <location>
        <begin position="56"/>
        <end position="59"/>
    </location>
    <ligand>
        <name>GTP</name>
        <dbReference type="ChEBI" id="CHEBI:37565"/>
    </ligand>
</feature>
<reference key="1">
    <citation type="journal article" date="2003" name="Lancet">
        <title>Genome sequence of Vibrio parahaemolyticus: a pathogenic mechanism distinct from that of V. cholerae.</title>
        <authorList>
            <person name="Makino K."/>
            <person name="Oshima K."/>
            <person name="Kurokawa K."/>
            <person name="Yokoyama K."/>
            <person name="Uda T."/>
            <person name="Tagomori K."/>
            <person name="Iijima Y."/>
            <person name="Najima M."/>
            <person name="Nakano M."/>
            <person name="Yamashita A."/>
            <person name="Kubota Y."/>
            <person name="Kimura S."/>
            <person name="Yasunaga T."/>
            <person name="Honda T."/>
            <person name="Shinagawa H."/>
            <person name="Hattori M."/>
            <person name="Iida T."/>
        </authorList>
    </citation>
    <scope>NUCLEOTIDE SEQUENCE [LARGE SCALE GENOMIC DNA]</scope>
    <source>
        <strain>RIMD 2210633</strain>
    </source>
</reference>